<reference key="1">
    <citation type="journal article" date="1996" name="Yeast">
        <title>Sequencing and analysis of a 35.4 kb region on the right arm of chromosome IV from Saccharomyces cerevisiae reveal 23 open reading frames.</title>
        <authorList>
            <person name="Eide L.G."/>
            <person name="Sander C."/>
            <person name="Prydz H."/>
        </authorList>
    </citation>
    <scope>NUCLEOTIDE SEQUENCE [GENOMIC DNA]</scope>
</reference>
<reference key="2">
    <citation type="journal article" date="1997" name="Nature">
        <title>The nucleotide sequence of Saccharomyces cerevisiae chromosome IV.</title>
        <authorList>
            <person name="Jacq C."/>
            <person name="Alt-Moerbe J."/>
            <person name="Andre B."/>
            <person name="Arnold W."/>
            <person name="Bahr A."/>
            <person name="Ballesta J.P.G."/>
            <person name="Bargues M."/>
            <person name="Baron L."/>
            <person name="Becker A."/>
            <person name="Biteau N."/>
            <person name="Bloecker H."/>
            <person name="Blugeon C."/>
            <person name="Boskovic J."/>
            <person name="Brandt P."/>
            <person name="Brueckner M."/>
            <person name="Buitrago M.J."/>
            <person name="Coster F."/>
            <person name="Delaveau T."/>
            <person name="del Rey F."/>
            <person name="Dujon B."/>
            <person name="Eide L.G."/>
            <person name="Garcia-Cantalejo J.M."/>
            <person name="Goffeau A."/>
            <person name="Gomez-Peris A."/>
            <person name="Granotier C."/>
            <person name="Hanemann V."/>
            <person name="Hankeln T."/>
            <person name="Hoheisel J.D."/>
            <person name="Jaeger W."/>
            <person name="Jimenez A."/>
            <person name="Jonniaux J.-L."/>
            <person name="Kraemer C."/>
            <person name="Kuester H."/>
            <person name="Laamanen P."/>
            <person name="Legros Y."/>
            <person name="Louis E.J."/>
            <person name="Moeller-Rieker S."/>
            <person name="Monnet A."/>
            <person name="Moro M."/>
            <person name="Mueller-Auer S."/>
            <person name="Nussbaumer B."/>
            <person name="Paricio N."/>
            <person name="Paulin L."/>
            <person name="Perea J."/>
            <person name="Perez-Alonso M."/>
            <person name="Perez-Ortin J.E."/>
            <person name="Pohl T.M."/>
            <person name="Prydz H."/>
            <person name="Purnelle B."/>
            <person name="Rasmussen S.W."/>
            <person name="Remacha M.A."/>
            <person name="Revuelta J.L."/>
            <person name="Rieger M."/>
            <person name="Salom D."/>
            <person name="Saluz H.P."/>
            <person name="Saiz J.E."/>
            <person name="Saren A.-M."/>
            <person name="Schaefer M."/>
            <person name="Scharfe M."/>
            <person name="Schmidt E.R."/>
            <person name="Schneider C."/>
            <person name="Scholler P."/>
            <person name="Schwarz S."/>
            <person name="Soler-Mira A."/>
            <person name="Urrestarazu L.A."/>
            <person name="Verhasselt P."/>
            <person name="Vissers S."/>
            <person name="Voet M."/>
            <person name="Volckaert G."/>
            <person name="Wagner G."/>
            <person name="Wambutt R."/>
            <person name="Wedler E."/>
            <person name="Wedler H."/>
            <person name="Woelfl S."/>
            <person name="Harris D.E."/>
            <person name="Bowman S."/>
            <person name="Brown D."/>
            <person name="Churcher C.M."/>
            <person name="Connor R."/>
            <person name="Dedman K."/>
            <person name="Gentles S."/>
            <person name="Hamlin N."/>
            <person name="Hunt S."/>
            <person name="Jones L."/>
            <person name="McDonald S."/>
            <person name="Murphy L.D."/>
            <person name="Niblett D."/>
            <person name="Odell C."/>
            <person name="Oliver K."/>
            <person name="Rajandream M.A."/>
            <person name="Richards C."/>
            <person name="Shore L."/>
            <person name="Walsh S.V."/>
            <person name="Barrell B.G."/>
            <person name="Dietrich F.S."/>
            <person name="Mulligan J.T."/>
            <person name="Allen E."/>
            <person name="Araujo R."/>
            <person name="Aviles E."/>
            <person name="Berno A."/>
            <person name="Carpenter J."/>
            <person name="Chen E."/>
            <person name="Cherry J.M."/>
            <person name="Chung E."/>
            <person name="Duncan M."/>
            <person name="Hunicke-Smith S."/>
            <person name="Hyman R.W."/>
            <person name="Komp C."/>
            <person name="Lashkari D."/>
            <person name="Lew H."/>
            <person name="Lin D."/>
            <person name="Mosedale D."/>
            <person name="Nakahara K."/>
            <person name="Namath A."/>
            <person name="Oefner P."/>
            <person name="Oh C."/>
            <person name="Petel F.X."/>
            <person name="Roberts D."/>
            <person name="Schramm S."/>
            <person name="Schroeder M."/>
            <person name="Shogren T."/>
            <person name="Shroff N."/>
            <person name="Winant A."/>
            <person name="Yelton M.A."/>
            <person name="Botstein D."/>
            <person name="Davis R.W."/>
            <person name="Johnston M."/>
            <person name="Andrews S."/>
            <person name="Brinkman R."/>
            <person name="Cooper J."/>
            <person name="Ding H."/>
            <person name="Du Z."/>
            <person name="Favello A."/>
            <person name="Fulton L."/>
            <person name="Gattung S."/>
            <person name="Greco T."/>
            <person name="Hallsworth K."/>
            <person name="Hawkins J."/>
            <person name="Hillier L.W."/>
            <person name="Jier M."/>
            <person name="Johnson D."/>
            <person name="Johnston L."/>
            <person name="Kirsten J."/>
            <person name="Kucaba T."/>
            <person name="Langston Y."/>
            <person name="Latreille P."/>
            <person name="Le T."/>
            <person name="Mardis E."/>
            <person name="Menezes S."/>
            <person name="Miller N."/>
            <person name="Nhan M."/>
            <person name="Pauley A."/>
            <person name="Peluso D."/>
            <person name="Rifkin L."/>
            <person name="Riles L."/>
            <person name="Taich A."/>
            <person name="Trevaskis E."/>
            <person name="Vignati D."/>
            <person name="Wilcox L."/>
            <person name="Wohldman P."/>
            <person name="Vaudin M."/>
            <person name="Wilson R."/>
            <person name="Waterston R."/>
            <person name="Albermann K."/>
            <person name="Hani J."/>
            <person name="Heumann K."/>
            <person name="Kleine K."/>
            <person name="Mewes H.-W."/>
            <person name="Zollner A."/>
            <person name="Zaccaria P."/>
        </authorList>
    </citation>
    <scope>NUCLEOTIDE SEQUENCE [LARGE SCALE GENOMIC DNA]</scope>
    <source>
        <strain>ATCC 204508 / S288c</strain>
    </source>
</reference>
<reference key="3">
    <citation type="journal article" date="2014" name="G3 (Bethesda)">
        <title>The reference genome sequence of Saccharomyces cerevisiae: Then and now.</title>
        <authorList>
            <person name="Engel S.R."/>
            <person name="Dietrich F.S."/>
            <person name="Fisk D.G."/>
            <person name="Binkley G."/>
            <person name="Balakrishnan R."/>
            <person name="Costanzo M.C."/>
            <person name="Dwight S.S."/>
            <person name="Hitz B.C."/>
            <person name="Karra K."/>
            <person name="Nash R.S."/>
            <person name="Weng S."/>
            <person name="Wong E.D."/>
            <person name="Lloyd P."/>
            <person name="Skrzypek M.S."/>
            <person name="Miyasato S.R."/>
            <person name="Simison M."/>
            <person name="Cherry J.M."/>
        </authorList>
    </citation>
    <scope>GENOME REANNOTATION</scope>
    <source>
        <strain>ATCC 204508 / S288c</strain>
    </source>
</reference>
<reference key="4">
    <citation type="journal article" date="2007" name="Genome Res.">
        <title>Approaching a complete repository of sequence-verified protein-encoding clones for Saccharomyces cerevisiae.</title>
        <authorList>
            <person name="Hu Y."/>
            <person name="Rolfs A."/>
            <person name="Bhullar B."/>
            <person name="Murthy T.V.S."/>
            <person name="Zhu C."/>
            <person name="Berger M.F."/>
            <person name="Camargo A.A."/>
            <person name="Kelley F."/>
            <person name="McCarron S."/>
            <person name="Jepson D."/>
            <person name="Richardson A."/>
            <person name="Raphael J."/>
            <person name="Moreira D."/>
            <person name="Taycher E."/>
            <person name="Zuo D."/>
            <person name="Mohr S."/>
            <person name="Kane M.F."/>
            <person name="Williamson J."/>
            <person name="Simpson A.J.G."/>
            <person name="Bulyk M.L."/>
            <person name="Harlow E."/>
            <person name="Marsischky G."/>
            <person name="Kolodner R.D."/>
            <person name="LaBaer J."/>
        </authorList>
    </citation>
    <scope>NUCLEOTIDE SEQUENCE [GENOMIC DNA]</scope>
    <source>
        <strain>ATCC 204508 / S288c</strain>
    </source>
</reference>
<reference key="5">
    <citation type="journal article" date="1997" name="Mol. Cell. Biol.">
        <title>Fal1p is an essential DEAD-box protein involved in 40S-ribosomal-subunit biogenesis in Saccharomyces cerevisiae.</title>
        <authorList>
            <person name="Kressler D."/>
            <person name="de la Cruz J."/>
            <person name="Rojo M."/>
            <person name="Linder P."/>
        </authorList>
    </citation>
    <scope>FUNCTION</scope>
    <scope>SUBCELLULAR LOCATION</scope>
    <scope>MUTAGENESIS OF ILE-85; GLN-144; VAL-244 AND VAL-246</scope>
</reference>
<reference key="6">
    <citation type="journal article" date="2003" name="Nature">
        <title>Global analysis of protein localization in budding yeast.</title>
        <authorList>
            <person name="Huh W.-K."/>
            <person name="Falvo J.V."/>
            <person name="Gerke L.C."/>
            <person name="Carroll A.S."/>
            <person name="Howson R.W."/>
            <person name="Weissman J.S."/>
            <person name="O'Shea E.K."/>
        </authorList>
    </citation>
    <scope>SUBCELLULAR LOCATION [LARGE SCALE ANALYSIS]</scope>
</reference>
<reference key="7">
    <citation type="journal article" date="2003" name="Nature">
        <title>Global analysis of protein expression in yeast.</title>
        <authorList>
            <person name="Ghaemmaghami S."/>
            <person name="Huh W.-K."/>
            <person name="Bower K."/>
            <person name="Howson R.W."/>
            <person name="Belle A."/>
            <person name="Dephoure N."/>
            <person name="O'Shea E.K."/>
            <person name="Weissman J.S."/>
        </authorList>
    </citation>
    <scope>LEVEL OF PROTEIN EXPRESSION [LARGE SCALE ANALYSIS]</scope>
</reference>
<proteinExistence type="evidence at protein level"/>
<protein>
    <recommendedName>
        <fullName>ATP-dependent RNA helicase FAL1</fullName>
        <ecNumber>3.6.4.13</ecNumber>
    </recommendedName>
    <alternativeName>
        <fullName>Translation initiation factor four A-like protein 1</fullName>
    </alternativeName>
</protein>
<evidence type="ECO:0000255" key="1">
    <source>
        <dbReference type="PROSITE-ProRule" id="PRU00541"/>
    </source>
</evidence>
<evidence type="ECO:0000255" key="2">
    <source>
        <dbReference type="PROSITE-ProRule" id="PRU00542"/>
    </source>
</evidence>
<evidence type="ECO:0000269" key="3">
    <source>
    </source>
</evidence>
<evidence type="ECO:0000269" key="4">
    <source>
    </source>
</evidence>
<evidence type="ECO:0000269" key="5">
    <source>
    </source>
</evidence>
<evidence type="ECO:0000305" key="6"/>
<dbReference type="EC" id="3.6.4.13"/>
<dbReference type="EMBL" id="X95966">
    <property type="protein sequence ID" value="CAA65213.1"/>
    <property type="molecule type" value="Genomic_DNA"/>
</dbReference>
<dbReference type="EMBL" id="Z49770">
    <property type="protein sequence ID" value="CAA89846.1"/>
    <property type="molecule type" value="Genomic_DNA"/>
</dbReference>
<dbReference type="EMBL" id="Z74317">
    <property type="protein sequence ID" value="CAA98842.1"/>
    <property type="molecule type" value="Genomic_DNA"/>
</dbReference>
<dbReference type="EMBL" id="AY723767">
    <property type="protein sequence ID" value="AAU09684.1"/>
    <property type="molecule type" value="Genomic_DNA"/>
</dbReference>
<dbReference type="EMBL" id="BK006938">
    <property type="protein sequence ID" value="DAA11867.1"/>
    <property type="molecule type" value="Genomic_DNA"/>
</dbReference>
<dbReference type="PIR" id="S54644">
    <property type="entry name" value="S54644"/>
</dbReference>
<dbReference type="RefSeq" id="NP_010304.3">
    <property type="nucleotide sequence ID" value="NM_001180329.3"/>
</dbReference>
<dbReference type="SMR" id="Q12099"/>
<dbReference type="BioGRID" id="32071">
    <property type="interactions" value="326"/>
</dbReference>
<dbReference type="ComplexPortal" id="CPX-242">
    <property type="entry name" value="FAL1-SGD1 complex"/>
</dbReference>
<dbReference type="DIP" id="DIP-4516N"/>
<dbReference type="FunCoup" id="Q12099">
    <property type="interactions" value="793"/>
</dbReference>
<dbReference type="IntAct" id="Q12099">
    <property type="interactions" value="31"/>
</dbReference>
<dbReference type="MINT" id="Q12099"/>
<dbReference type="STRING" id="4932.YDR021W"/>
<dbReference type="CarbonylDB" id="Q12099"/>
<dbReference type="GlyGen" id="Q12099">
    <property type="glycosylation" value="1 site"/>
</dbReference>
<dbReference type="iPTMnet" id="Q12099"/>
<dbReference type="PaxDb" id="4932-YDR021W"/>
<dbReference type="PeptideAtlas" id="Q12099"/>
<dbReference type="EnsemblFungi" id="YDR021W_mRNA">
    <property type="protein sequence ID" value="YDR021W"/>
    <property type="gene ID" value="YDR021W"/>
</dbReference>
<dbReference type="GeneID" id="851584"/>
<dbReference type="KEGG" id="sce:YDR021W"/>
<dbReference type="AGR" id="SGD:S000002428"/>
<dbReference type="SGD" id="S000002428">
    <property type="gene designation" value="FAL1"/>
</dbReference>
<dbReference type="VEuPathDB" id="FungiDB:YDR021W"/>
<dbReference type="eggNOG" id="KOG0328">
    <property type="taxonomic scope" value="Eukaryota"/>
</dbReference>
<dbReference type="GeneTree" id="ENSGT00940000155037"/>
<dbReference type="HOGENOM" id="CLU_003041_1_0_1"/>
<dbReference type="InParanoid" id="Q12099"/>
<dbReference type="OMA" id="DTIHGDK"/>
<dbReference type="OrthoDB" id="10265785at2759"/>
<dbReference type="BioCyc" id="YEAST:G3O-29638-MONOMER"/>
<dbReference type="Reactome" id="R-SCE-159236">
    <property type="pathway name" value="Transport of Mature mRNA derived from an Intron-Containing Transcript"/>
</dbReference>
<dbReference type="Reactome" id="R-SCE-429947">
    <property type="pathway name" value="Deadenylation of mRNA"/>
</dbReference>
<dbReference type="Reactome" id="R-SCE-975957">
    <property type="pathway name" value="Nonsense Mediated Decay (NMD) enhanced by the Exon Junction Complex (EJC)"/>
</dbReference>
<dbReference type="BioGRID-ORCS" id="851584">
    <property type="hits" value="2 hits in 10 CRISPR screens"/>
</dbReference>
<dbReference type="CD-CODE" id="BDAE0F88">
    <property type="entry name" value="Nucleolus"/>
</dbReference>
<dbReference type="PRO" id="PR:Q12099"/>
<dbReference type="Proteomes" id="UP000002311">
    <property type="component" value="Chromosome IV"/>
</dbReference>
<dbReference type="RNAct" id="Q12099">
    <property type="molecule type" value="protein"/>
</dbReference>
<dbReference type="GO" id="GO:0071013">
    <property type="term" value="C:catalytic step 2 spliceosome"/>
    <property type="evidence" value="ECO:0000318"/>
    <property type="project" value="GO_Central"/>
</dbReference>
<dbReference type="GO" id="GO:0097078">
    <property type="term" value="C:FAL1-SGD1 complex"/>
    <property type="evidence" value="ECO:0000314"/>
    <property type="project" value="ComplexPortal"/>
</dbReference>
<dbReference type="GO" id="GO:0005730">
    <property type="term" value="C:nucleolus"/>
    <property type="evidence" value="ECO:0000314"/>
    <property type="project" value="ComplexPortal"/>
</dbReference>
<dbReference type="GO" id="GO:0030688">
    <property type="term" value="C:preribosome, small subunit precursor"/>
    <property type="evidence" value="ECO:0000314"/>
    <property type="project" value="GO_Central"/>
</dbReference>
<dbReference type="GO" id="GO:0032040">
    <property type="term" value="C:small-subunit processome"/>
    <property type="evidence" value="ECO:0000353"/>
    <property type="project" value="ComplexPortal"/>
</dbReference>
<dbReference type="GO" id="GO:0005524">
    <property type="term" value="F:ATP binding"/>
    <property type="evidence" value="ECO:0007669"/>
    <property type="project" value="UniProtKB-KW"/>
</dbReference>
<dbReference type="GO" id="GO:0016887">
    <property type="term" value="F:ATP hydrolysis activity"/>
    <property type="evidence" value="ECO:0007669"/>
    <property type="project" value="RHEA"/>
</dbReference>
<dbReference type="GO" id="GO:0003729">
    <property type="term" value="F:mRNA binding"/>
    <property type="evidence" value="ECO:0000318"/>
    <property type="project" value="GO_Central"/>
</dbReference>
<dbReference type="GO" id="GO:0003724">
    <property type="term" value="F:RNA helicase activity"/>
    <property type="evidence" value="ECO:0000247"/>
    <property type="project" value="SGD"/>
</dbReference>
<dbReference type="GO" id="GO:0030490">
    <property type="term" value="P:maturation of SSU-rRNA"/>
    <property type="evidence" value="ECO:0000303"/>
    <property type="project" value="ComplexPortal"/>
</dbReference>
<dbReference type="GO" id="GO:0000462">
    <property type="term" value="P:maturation of SSU-rRNA from tricistronic rRNA transcript (SSU-rRNA, 5.8S rRNA, LSU-rRNA)"/>
    <property type="evidence" value="ECO:0000315"/>
    <property type="project" value="SGD"/>
</dbReference>
<dbReference type="GO" id="GO:0000398">
    <property type="term" value="P:mRNA splicing, via spliceosome"/>
    <property type="evidence" value="ECO:0000318"/>
    <property type="project" value="GO_Central"/>
</dbReference>
<dbReference type="CDD" id="cd18787">
    <property type="entry name" value="SF2_C_DEAD"/>
    <property type="match status" value="1"/>
</dbReference>
<dbReference type="FunFam" id="3.40.50.300:FF:000849">
    <property type="entry name" value="ATP-dependent RNA helicase DBP5"/>
    <property type="match status" value="1"/>
</dbReference>
<dbReference type="FunFam" id="3.40.50.300:FF:000031">
    <property type="entry name" value="Eukaryotic initiation factor 4A-III"/>
    <property type="match status" value="1"/>
</dbReference>
<dbReference type="Gene3D" id="3.40.50.300">
    <property type="entry name" value="P-loop containing nucleotide triphosphate hydrolases"/>
    <property type="match status" value="2"/>
</dbReference>
<dbReference type="InterPro" id="IPR011545">
    <property type="entry name" value="DEAD/DEAH_box_helicase_dom"/>
</dbReference>
<dbReference type="InterPro" id="IPR014001">
    <property type="entry name" value="Helicase_ATP-bd"/>
</dbReference>
<dbReference type="InterPro" id="IPR001650">
    <property type="entry name" value="Helicase_C-like"/>
</dbReference>
<dbReference type="InterPro" id="IPR027417">
    <property type="entry name" value="P-loop_NTPase"/>
</dbReference>
<dbReference type="InterPro" id="IPR000629">
    <property type="entry name" value="RNA-helicase_DEAD-box_CS"/>
</dbReference>
<dbReference type="InterPro" id="IPR014014">
    <property type="entry name" value="RNA_helicase_DEAD_Q_motif"/>
</dbReference>
<dbReference type="PANTHER" id="PTHR47958">
    <property type="entry name" value="ATP-DEPENDENT RNA HELICASE DBP3"/>
    <property type="match status" value="1"/>
</dbReference>
<dbReference type="Pfam" id="PF00270">
    <property type="entry name" value="DEAD"/>
    <property type="match status" value="1"/>
</dbReference>
<dbReference type="Pfam" id="PF00271">
    <property type="entry name" value="Helicase_C"/>
    <property type="match status" value="1"/>
</dbReference>
<dbReference type="SMART" id="SM00487">
    <property type="entry name" value="DEXDc"/>
    <property type="match status" value="1"/>
</dbReference>
<dbReference type="SMART" id="SM00490">
    <property type="entry name" value="HELICc"/>
    <property type="match status" value="1"/>
</dbReference>
<dbReference type="SUPFAM" id="SSF52540">
    <property type="entry name" value="P-loop containing nucleoside triphosphate hydrolases"/>
    <property type="match status" value="1"/>
</dbReference>
<dbReference type="PROSITE" id="PS00039">
    <property type="entry name" value="DEAD_ATP_HELICASE"/>
    <property type="match status" value="1"/>
</dbReference>
<dbReference type="PROSITE" id="PS51192">
    <property type="entry name" value="HELICASE_ATP_BIND_1"/>
    <property type="match status" value="1"/>
</dbReference>
<dbReference type="PROSITE" id="PS51194">
    <property type="entry name" value="HELICASE_CTER"/>
    <property type="match status" value="1"/>
</dbReference>
<dbReference type="PROSITE" id="PS51195">
    <property type="entry name" value="Q_MOTIF"/>
    <property type="match status" value="1"/>
</dbReference>
<organism>
    <name type="scientific">Saccharomyces cerevisiae (strain ATCC 204508 / S288c)</name>
    <name type="common">Baker's yeast</name>
    <dbReference type="NCBI Taxonomy" id="559292"/>
    <lineage>
        <taxon>Eukaryota</taxon>
        <taxon>Fungi</taxon>
        <taxon>Dikarya</taxon>
        <taxon>Ascomycota</taxon>
        <taxon>Saccharomycotina</taxon>
        <taxon>Saccharomycetes</taxon>
        <taxon>Saccharomycetales</taxon>
        <taxon>Saccharomycetaceae</taxon>
        <taxon>Saccharomyces</taxon>
    </lineage>
</organism>
<sequence>MSFDREEDQKLKFKTSKKLKVSSTFESMNLKDDLLRGIYSYGFEAPSSIQSRAITQIISGKDVIAQAQSGTGKTATFTIGLLQAIDLRKKDLQALILSPTRELASQIGQVVKNLGDYMNVNAFAITGGKTLKDDLKKMQKHGCQAVSGTPGRVLDMIKKQMLQTRNVQMLVLDEADELLSETLGFKQQIYDIFAKLPKNCQVVVVSATMNKDILEVTRKFMNDPVKILVKRDEISLEGIKQYVVNVDKEEWKFDTLCDIYDSLTITQCVIFCNTKKKVDWLSQRLIQSNFAVVSMHGDMKQEERDKVMNDFRTGHSRVLISTDVWARGIDVQQVSLVINYDLPEIIENYIHRIGRSGRFGRKGVAINFITKADLAKLREIEKFYSIKINPMPANFAELS</sequence>
<comment type="function">
    <text evidence="5">ATP-dependent RNA helicase involved in 40S ribosomal subunit biogenesis. Required for the processing and cleavage of 35S pre-rRNA at sites A0, A1, and A2, leading to mature 18S rRNA.</text>
</comment>
<comment type="catalytic activity">
    <reaction>
        <text>ATP + H2O = ADP + phosphate + H(+)</text>
        <dbReference type="Rhea" id="RHEA:13065"/>
        <dbReference type="ChEBI" id="CHEBI:15377"/>
        <dbReference type="ChEBI" id="CHEBI:15378"/>
        <dbReference type="ChEBI" id="CHEBI:30616"/>
        <dbReference type="ChEBI" id="CHEBI:43474"/>
        <dbReference type="ChEBI" id="CHEBI:456216"/>
        <dbReference type="EC" id="3.6.4.13"/>
    </reaction>
</comment>
<comment type="interaction">
    <interactant intactId="EBI-6776">
        <id>Q12099</id>
    </interactant>
    <interactant intactId="EBI-34377">
        <id>Q06132</id>
        <label>SGD1</label>
    </interactant>
    <organismsDiffer>false</organismsDiffer>
    <experiments>4</experiments>
</comment>
<comment type="subcellular location">
    <subcellularLocation>
        <location evidence="3 5">Nucleus</location>
        <location evidence="3 5">Nucleolus</location>
    </subcellularLocation>
</comment>
<comment type="domain">
    <text>The Q motif is unique to and characteristic of the DEAD box family of RNA helicases and controls ATP binding and hydrolysis.</text>
</comment>
<comment type="miscellaneous">
    <text evidence="4">Present with 3090 molecules/cell in log phase SD medium.</text>
</comment>
<comment type="similarity">
    <text evidence="6">Belongs to the DEAD box helicase family. DDX48/FAL1 subfamily.</text>
</comment>
<feature type="chain" id="PRO_0000054975" description="ATP-dependent RNA helicase FAL1">
    <location>
        <begin position="1"/>
        <end position="399"/>
    </location>
</feature>
<feature type="domain" description="Helicase ATP-binding" evidence="1">
    <location>
        <begin position="54"/>
        <end position="227"/>
    </location>
</feature>
<feature type="domain" description="Helicase C-terminal" evidence="2">
    <location>
        <begin position="238"/>
        <end position="399"/>
    </location>
</feature>
<feature type="short sequence motif" description="Q motif">
    <location>
        <begin position="23"/>
        <end position="51"/>
    </location>
</feature>
<feature type="short sequence motif" description="DEAD box">
    <location>
        <begin position="173"/>
        <end position="176"/>
    </location>
</feature>
<feature type="binding site" evidence="1">
    <location>
        <begin position="67"/>
        <end position="74"/>
    </location>
    <ligand>
        <name>ATP</name>
        <dbReference type="ChEBI" id="CHEBI:30616"/>
    </ligand>
</feature>
<feature type="mutagenesis site" description="Decreases the amount of 40S ribosomal subunit; when associated with R-144; A-244 and A-246." evidence="5">
    <original>I</original>
    <variation>T</variation>
    <location>
        <position position="85"/>
    </location>
</feature>
<feature type="mutagenesis site" description="Decreases the amount of 40S ribosomal subunit; when associated with T-85; A-244 and A-246." evidence="5">
    <original>Q</original>
    <variation>R</variation>
    <location>
        <position position="144"/>
    </location>
</feature>
<feature type="mutagenesis site" description="Decreases the amount of 40S ribosomal subunit; when associated with T-85; R-144 and A-246." evidence="5">
    <original>V</original>
    <variation>A</variation>
    <location>
        <position position="244"/>
    </location>
</feature>
<feature type="mutagenesis site" description="Decreases the amount of 40S ribosomal subunit; when associated with T-85; R-144 and A-244." evidence="5">
    <original>V</original>
    <variation>A</variation>
    <location>
        <position position="246"/>
    </location>
</feature>
<accession>Q12099</accession>
<accession>D6VS07</accession>
<gene>
    <name type="primary">FAL1</name>
    <name type="ordered locus">YDR021W</name>
    <name type="ORF">PZC399</name>
    <name type="ORF">YD9335.07</name>
</gene>
<name>FAL1_YEAST</name>
<keyword id="KW-0067">ATP-binding</keyword>
<keyword id="KW-0347">Helicase</keyword>
<keyword id="KW-0378">Hydrolase</keyword>
<keyword id="KW-0547">Nucleotide-binding</keyword>
<keyword id="KW-0539">Nucleus</keyword>
<keyword id="KW-1185">Reference proteome</keyword>
<keyword id="KW-0690">Ribosome biogenesis</keyword>
<keyword id="KW-0694">RNA-binding</keyword>
<keyword id="KW-0698">rRNA processing</keyword>